<feature type="chain" id="PRO_1000198322" description="UPF0303 protein Bcenmc03_1534">
    <location>
        <begin position="1"/>
        <end position="165"/>
    </location>
</feature>
<reference key="1">
    <citation type="submission" date="2008-02" db="EMBL/GenBank/DDBJ databases">
        <title>Complete sequence of chromosome 1 of Burkholderia cenocepacia MC0-3.</title>
        <authorList>
            <person name="Copeland A."/>
            <person name="Lucas S."/>
            <person name="Lapidus A."/>
            <person name="Barry K."/>
            <person name="Bruce D."/>
            <person name="Goodwin L."/>
            <person name="Glavina del Rio T."/>
            <person name="Dalin E."/>
            <person name="Tice H."/>
            <person name="Pitluck S."/>
            <person name="Chain P."/>
            <person name="Malfatti S."/>
            <person name="Shin M."/>
            <person name="Vergez L."/>
            <person name="Schmutz J."/>
            <person name="Larimer F."/>
            <person name="Land M."/>
            <person name="Hauser L."/>
            <person name="Kyrpides N."/>
            <person name="Mikhailova N."/>
            <person name="Tiedje J."/>
            <person name="Richardson P."/>
        </authorList>
    </citation>
    <scope>NUCLEOTIDE SEQUENCE [LARGE SCALE GENOMIC DNA]</scope>
    <source>
        <strain>MC0-3</strain>
    </source>
</reference>
<dbReference type="EMBL" id="CP000958">
    <property type="protein sequence ID" value="ACA90709.1"/>
    <property type="molecule type" value="Genomic_DNA"/>
</dbReference>
<dbReference type="RefSeq" id="WP_006476110.1">
    <property type="nucleotide sequence ID" value="NC_010508.1"/>
</dbReference>
<dbReference type="SMR" id="B1K0S8"/>
<dbReference type="GeneID" id="83048334"/>
<dbReference type="KEGG" id="bcm:Bcenmc03_1534"/>
<dbReference type="HOGENOM" id="CLU_101036_2_2_4"/>
<dbReference type="Proteomes" id="UP000002169">
    <property type="component" value="Chromosome 1"/>
</dbReference>
<dbReference type="Gene3D" id="3.30.450.150">
    <property type="entry name" value="Haem-degrading domain"/>
    <property type="match status" value="1"/>
</dbReference>
<dbReference type="HAMAP" id="MF_00761">
    <property type="entry name" value="UPF0303"/>
    <property type="match status" value="1"/>
</dbReference>
<dbReference type="InterPro" id="IPR005624">
    <property type="entry name" value="PduO/GlcC-like"/>
</dbReference>
<dbReference type="InterPro" id="IPR038084">
    <property type="entry name" value="PduO/GlcC-like_sf"/>
</dbReference>
<dbReference type="InterPro" id="IPR010371">
    <property type="entry name" value="YBR137W-like"/>
</dbReference>
<dbReference type="NCBIfam" id="NF002695">
    <property type="entry name" value="PRK02487.1-4"/>
    <property type="match status" value="1"/>
</dbReference>
<dbReference type="NCBIfam" id="NF002696">
    <property type="entry name" value="PRK02487.1-5"/>
    <property type="match status" value="1"/>
</dbReference>
<dbReference type="PANTHER" id="PTHR28255">
    <property type="match status" value="1"/>
</dbReference>
<dbReference type="PANTHER" id="PTHR28255:SF1">
    <property type="entry name" value="UPF0303 PROTEIN YBR137W"/>
    <property type="match status" value="1"/>
</dbReference>
<dbReference type="Pfam" id="PF03928">
    <property type="entry name" value="HbpS-like"/>
    <property type="match status" value="1"/>
</dbReference>
<dbReference type="PIRSF" id="PIRSF008757">
    <property type="entry name" value="UCP008757"/>
    <property type="match status" value="1"/>
</dbReference>
<dbReference type="SUPFAM" id="SSF143744">
    <property type="entry name" value="GlcG-like"/>
    <property type="match status" value="1"/>
</dbReference>
<evidence type="ECO:0000255" key="1">
    <source>
        <dbReference type="HAMAP-Rule" id="MF_00761"/>
    </source>
</evidence>
<gene>
    <name type="ordered locus">Bcenmc03_1534</name>
</gene>
<proteinExistence type="inferred from homology"/>
<comment type="similarity">
    <text evidence="1">Belongs to the UPF0303 family.</text>
</comment>
<organism>
    <name type="scientific">Burkholderia orbicola (strain MC0-3)</name>
    <dbReference type="NCBI Taxonomy" id="406425"/>
    <lineage>
        <taxon>Bacteria</taxon>
        <taxon>Pseudomonadati</taxon>
        <taxon>Pseudomonadota</taxon>
        <taxon>Betaproteobacteria</taxon>
        <taxon>Burkholderiales</taxon>
        <taxon>Burkholderiaceae</taxon>
        <taxon>Burkholderia</taxon>
        <taxon>Burkholderia cepacia complex</taxon>
        <taxon>Burkholderia orbicola</taxon>
    </lineage>
</organism>
<sequence>MDIAHDLQSIGAQEQALVFPHFDPARAWALGNRMHALATSRGHAIAIDIVTFGQPLFYAALAGATPDNADWVRRKRNVVAHFRRSSYAIGLRMQQAGATLADKHGLPVAEYASHGGSFPLTVAGAGVIGSITASGLPQRADHEFVVEALCAELGHDYAVLALARS</sequence>
<name>Y1534_BURO0</name>
<accession>B1K0S8</accession>
<protein>
    <recommendedName>
        <fullName evidence="1">UPF0303 protein Bcenmc03_1534</fullName>
    </recommendedName>
</protein>